<proteinExistence type="inferred from homology"/>
<protein>
    <recommendedName>
        <fullName evidence="1">NAD kinase 2</fullName>
        <ecNumber evidence="1">2.7.1.23</ecNumber>
    </recommendedName>
    <alternativeName>
        <fullName evidence="1">ATP-dependent NAD kinase 2</fullName>
    </alternativeName>
</protein>
<comment type="function">
    <text evidence="1">Involved in the regulation of the intracellular balance of NAD and NADP, and is a key enzyme in the biosynthesis of NADP. Catalyzes specifically the phosphorylation on 2'-hydroxyl of the adenosine moiety of NAD to yield NADP.</text>
</comment>
<comment type="catalytic activity">
    <reaction evidence="1">
        <text>NAD(+) + ATP = ADP + NADP(+) + H(+)</text>
        <dbReference type="Rhea" id="RHEA:18629"/>
        <dbReference type="ChEBI" id="CHEBI:15378"/>
        <dbReference type="ChEBI" id="CHEBI:30616"/>
        <dbReference type="ChEBI" id="CHEBI:57540"/>
        <dbReference type="ChEBI" id="CHEBI:58349"/>
        <dbReference type="ChEBI" id="CHEBI:456216"/>
        <dbReference type="EC" id="2.7.1.23"/>
    </reaction>
</comment>
<comment type="cofactor">
    <cofactor evidence="1">
        <name>a divalent metal cation</name>
        <dbReference type="ChEBI" id="CHEBI:60240"/>
    </cofactor>
</comment>
<comment type="subcellular location">
    <subcellularLocation>
        <location evidence="1">Cytoplasm</location>
    </subcellularLocation>
</comment>
<comment type="similarity">
    <text evidence="1">Belongs to the NAD kinase family.</text>
</comment>
<name>NADK2_LISMO</name>
<reference key="1">
    <citation type="journal article" date="2001" name="Science">
        <title>Comparative genomics of Listeria species.</title>
        <authorList>
            <person name="Glaser P."/>
            <person name="Frangeul L."/>
            <person name="Buchrieser C."/>
            <person name="Rusniok C."/>
            <person name="Amend A."/>
            <person name="Baquero F."/>
            <person name="Berche P."/>
            <person name="Bloecker H."/>
            <person name="Brandt P."/>
            <person name="Chakraborty T."/>
            <person name="Charbit A."/>
            <person name="Chetouani F."/>
            <person name="Couve E."/>
            <person name="de Daruvar A."/>
            <person name="Dehoux P."/>
            <person name="Domann E."/>
            <person name="Dominguez-Bernal G."/>
            <person name="Duchaud E."/>
            <person name="Durant L."/>
            <person name="Dussurget O."/>
            <person name="Entian K.-D."/>
            <person name="Fsihi H."/>
            <person name="Garcia-del Portillo F."/>
            <person name="Garrido P."/>
            <person name="Gautier L."/>
            <person name="Goebel W."/>
            <person name="Gomez-Lopez N."/>
            <person name="Hain T."/>
            <person name="Hauf J."/>
            <person name="Jackson D."/>
            <person name="Jones L.-M."/>
            <person name="Kaerst U."/>
            <person name="Kreft J."/>
            <person name="Kuhn M."/>
            <person name="Kunst F."/>
            <person name="Kurapkat G."/>
            <person name="Madueno E."/>
            <person name="Maitournam A."/>
            <person name="Mata Vicente J."/>
            <person name="Ng E."/>
            <person name="Nedjari H."/>
            <person name="Nordsiek G."/>
            <person name="Novella S."/>
            <person name="de Pablos B."/>
            <person name="Perez-Diaz J.-C."/>
            <person name="Purcell R."/>
            <person name="Remmel B."/>
            <person name="Rose M."/>
            <person name="Schlueter T."/>
            <person name="Simoes N."/>
            <person name="Tierrez A."/>
            <person name="Vazquez-Boland J.-A."/>
            <person name="Voss H."/>
            <person name="Wehland J."/>
            <person name="Cossart P."/>
        </authorList>
    </citation>
    <scope>NUCLEOTIDE SEQUENCE [LARGE SCALE GENOMIC DNA]</scope>
    <source>
        <strain>ATCC BAA-679 / EGD-e</strain>
    </source>
</reference>
<gene>
    <name evidence="1" type="primary">nadK2</name>
    <name type="ordered locus">lmo1586</name>
</gene>
<evidence type="ECO:0000255" key="1">
    <source>
        <dbReference type="HAMAP-Rule" id="MF_00361"/>
    </source>
</evidence>
<accession>P65770</accession>
<accession>Q92BC2</accession>
<sequence>MAKTIFYFSYRKTEELHAKAKELKKITTDYGYELTDDYQKANVIISIGGDGAFLKSVRETGFRQDCLYAGIALTEQLGQYCDFHINQLDEIIKAAIEDRWLVRRYPTIYGTVNNTKAFYVLNEFNIRSSIIRTLTMDLYINDSHFETFRGDGMVISTPTGSTAYNKSVNGSIVDPLLPSMQVSELASINNNKFRTLGSSFILSPKRKLRIEIASEEGNNEFPMIGMDSEALSIQHVHEVNLEVGDRFINIIKLPKNSFWDKVKRNFL</sequence>
<keyword id="KW-0067">ATP-binding</keyword>
<keyword id="KW-0963">Cytoplasm</keyword>
<keyword id="KW-0418">Kinase</keyword>
<keyword id="KW-0520">NAD</keyword>
<keyword id="KW-0521">NADP</keyword>
<keyword id="KW-0547">Nucleotide-binding</keyword>
<keyword id="KW-1185">Reference proteome</keyword>
<keyword id="KW-0808">Transferase</keyword>
<feature type="chain" id="PRO_0000120633" description="NAD kinase 2">
    <location>
        <begin position="1"/>
        <end position="267"/>
    </location>
</feature>
<feature type="active site" description="Proton acceptor" evidence="1">
    <location>
        <position position="50"/>
    </location>
</feature>
<feature type="binding site" evidence="1">
    <location>
        <begin position="50"/>
        <end position="51"/>
    </location>
    <ligand>
        <name>NAD(+)</name>
        <dbReference type="ChEBI" id="CHEBI:57540"/>
    </ligand>
</feature>
<feature type="binding site" evidence="1">
    <location>
        <position position="55"/>
    </location>
    <ligand>
        <name>NAD(+)</name>
        <dbReference type="ChEBI" id="CHEBI:57540"/>
    </ligand>
</feature>
<feature type="binding site" evidence="1">
    <location>
        <begin position="122"/>
        <end position="123"/>
    </location>
    <ligand>
        <name>NAD(+)</name>
        <dbReference type="ChEBI" id="CHEBI:57540"/>
    </ligand>
</feature>
<feature type="binding site" evidence="1">
    <location>
        <position position="149"/>
    </location>
    <ligand>
        <name>NAD(+)</name>
        <dbReference type="ChEBI" id="CHEBI:57540"/>
    </ligand>
</feature>
<feature type="binding site" evidence="1">
    <location>
        <position position="151"/>
    </location>
    <ligand>
        <name>NAD(+)</name>
        <dbReference type="ChEBI" id="CHEBI:57540"/>
    </ligand>
</feature>
<feature type="binding site" evidence="1">
    <location>
        <begin position="162"/>
        <end position="167"/>
    </location>
    <ligand>
        <name>NAD(+)</name>
        <dbReference type="ChEBI" id="CHEBI:57540"/>
    </ligand>
</feature>
<feature type="binding site" evidence="1">
    <location>
        <position position="186"/>
    </location>
    <ligand>
        <name>NAD(+)</name>
        <dbReference type="ChEBI" id="CHEBI:57540"/>
    </ligand>
</feature>
<dbReference type="EC" id="2.7.1.23" evidence="1"/>
<dbReference type="EMBL" id="AL591979">
    <property type="protein sequence ID" value="CAC99664.1"/>
    <property type="molecule type" value="Genomic_DNA"/>
</dbReference>
<dbReference type="PIR" id="AB1273">
    <property type="entry name" value="AB1273"/>
</dbReference>
<dbReference type="RefSeq" id="WP_003723315.1">
    <property type="nucleotide sequence ID" value="NZ_CP149495.1"/>
</dbReference>
<dbReference type="SMR" id="P65770"/>
<dbReference type="STRING" id="169963.gene:17594243"/>
<dbReference type="PaxDb" id="169963-lmo1586"/>
<dbReference type="EnsemblBacteria" id="CAC99664">
    <property type="protein sequence ID" value="CAC99664"/>
    <property type="gene ID" value="CAC99664"/>
</dbReference>
<dbReference type="KEGG" id="lmo:lmo1586"/>
<dbReference type="PATRIC" id="fig|169963.11.peg.1628"/>
<dbReference type="eggNOG" id="COG0061">
    <property type="taxonomic scope" value="Bacteria"/>
</dbReference>
<dbReference type="HOGENOM" id="CLU_008831_0_3_9"/>
<dbReference type="OrthoDB" id="9774737at2"/>
<dbReference type="PhylomeDB" id="P65770"/>
<dbReference type="BioCyc" id="LMON169963:LMO1586-MONOMER"/>
<dbReference type="Proteomes" id="UP000000817">
    <property type="component" value="Chromosome"/>
</dbReference>
<dbReference type="GO" id="GO:0005737">
    <property type="term" value="C:cytoplasm"/>
    <property type="evidence" value="ECO:0007669"/>
    <property type="project" value="UniProtKB-SubCell"/>
</dbReference>
<dbReference type="GO" id="GO:0005524">
    <property type="term" value="F:ATP binding"/>
    <property type="evidence" value="ECO:0007669"/>
    <property type="project" value="UniProtKB-KW"/>
</dbReference>
<dbReference type="GO" id="GO:0046872">
    <property type="term" value="F:metal ion binding"/>
    <property type="evidence" value="ECO:0007669"/>
    <property type="project" value="UniProtKB-UniRule"/>
</dbReference>
<dbReference type="GO" id="GO:0051287">
    <property type="term" value="F:NAD binding"/>
    <property type="evidence" value="ECO:0007669"/>
    <property type="project" value="UniProtKB-ARBA"/>
</dbReference>
<dbReference type="GO" id="GO:0003951">
    <property type="term" value="F:NAD+ kinase activity"/>
    <property type="evidence" value="ECO:0000318"/>
    <property type="project" value="GO_Central"/>
</dbReference>
<dbReference type="GO" id="GO:0019674">
    <property type="term" value="P:NAD metabolic process"/>
    <property type="evidence" value="ECO:0007669"/>
    <property type="project" value="InterPro"/>
</dbReference>
<dbReference type="GO" id="GO:0006741">
    <property type="term" value="P:NADP biosynthetic process"/>
    <property type="evidence" value="ECO:0000318"/>
    <property type="project" value="GO_Central"/>
</dbReference>
<dbReference type="Gene3D" id="3.40.50.10330">
    <property type="entry name" value="Probable inorganic polyphosphate/atp-NAD kinase, domain 1"/>
    <property type="match status" value="1"/>
</dbReference>
<dbReference type="Gene3D" id="2.60.200.30">
    <property type="entry name" value="Probable inorganic polyphosphate/atp-NAD kinase, domain 2"/>
    <property type="match status" value="1"/>
</dbReference>
<dbReference type="HAMAP" id="MF_00361">
    <property type="entry name" value="NAD_kinase"/>
    <property type="match status" value="1"/>
</dbReference>
<dbReference type="InterPro" id="IPR017438">
    <property type="entry name" value="ATP-NAD_kinase_N"/>
</dbReference>
<dbReference type="InterPro" id="IPR017437">
    <property type="entry name" value="ATP-NAD_kinase_PpnK-typ_C"/>
</dbReference>
<dbReference type="InterPro" id="IPR016064">
    <property type="entry name" value="NAD/diacylglycerol_kinase_sf"/>
</dbReference>
<dbReference type="InterPro" id="IPR002504">
    <property type="entry name" value="NADK"/>
</dbReference>
<dbReference type="NCBIfam" id="NF002902">
    <property type="entry name" value="PRK03501.1"/>
    <property type="match status" value="1"/>
</dbReference>
<dbReference type="PANTHER" id="PTHR20275">
    <property type="entry name" value="NAD KINASE"/>
    <property type="match status" value="1"/>
</dbReference>
<dbReference type="PANTHER" id="PTHR20275:SF9">
    <property type="entry name" value="NAD KINASE 2"/>
    <property type="match status" value="1"/>
</dbReference>
<dbReference type="Pfam" id="PF20143">
    <property type="entry name" value="NAD_kinase_C"/>
    <property type="match status" value="1"/>
</dbReference>
<dbReference type="SUPFAM" id="SSF111331">
    <property type="entry name" value="NAD kinase/diacylglycerol kinase-like"/>
    <property type="match status" value="1"/>
</dbReference>
<organism>
    <name type="scientific">Listeria monocytogenes serovar 1/2a (strain ATCC BAA-679 / EGD-e)</name>
    <dbReference type="NCBI Taxonomy" id="169963"/>
    <lineage>
        <taxon>Bacteria</taxon>
        <taxon>Bacillati</taxon>
        <taxon>Bacillota</taxon>
        <taxon>Bacilli</taxon>
        <taxon>Bacillales</taxon>
        <taxon>Listeriaceae</taxon>
        <taxon>Listeria</taxon>
    </lineage>
</organism>